<organism>
    <name type="scientific">Bos taurus</name>
    <name type="common">Bovine</name>
    <dbReference type="NCBI Taxonomy" id="9913"/>
    <lineage>
        <taxon>Eukaryota</taxon>
        <taxon>Metazoa</taxon>
        <taxon>Chordata</taxon>
        <taxon>Craniata</taxon>
        <taxon>Vertebrata</taxon>
        <taxon>Euteleostomi</taxon>
        <taxon>Mammalia</taxon>
        <taxon>Eutheria</taxon>
        <taxon>Laurasiatheria</taxon>
        <taxon>Artiodactyla</taxon>
        <taxon>Ruminantia</taxon>
        <taxon>Pecora</taxon>
        <taxon>Bovidae</taxon>
        <taxon>Bovinae</taxon>
        <taxon>Bos</taxon>
    </lineage>
</organism>
<reference key="1">
    <citation type="submission" date="2005-08" db="EMBL/GenBank/DDBJ databases">
        <authorList>
            <consortium name="NIH - Mammalian Gene Collection (MGC) project"/>
        </authorList>
    </citation>
    <scope>NUCLEOTIDE SEQUENCE [LARGE SCALE MRNA]</scope>
    <source>
        <strain>Hereford</strain>
        <tissue>Thymus</tissue>
    </source>
</reference>
<comment type="function">
    <text evidence="1 2">Sequence-specific RNA-binding protein which participates in the control of pre-mRNA splicing (By similarity). Can either activate or suppress exon inclusion. Acts additively with RBMX to promote exon 7 inclusion of the survival motor neuron SMN2. Activates the splicing of MAPT/Tau exon 10. Alters pre-mRNA splicing patterns by antagonizing the effects of splicing regulators, like RBMX. Binds to the AG-rich SE2 domain in the SMN exon 7 RNA. Binds to pre-mRNA (By similarity).</text>
</comment>
<comment type="subunit">
    <text evidence="1 2 3">Found in a pre-mRNA exonic splicing enhancer (ESE) complex with TRA2B/SFRS10, SNRNP70, SNRPA1 and SRRM1. Binds to A3 enhancer proteins SFRS4, SFRS5, SFRS6 and SFRS9. Interacts with CPSF6, RBMY1A1, RBMX, RNPS1 and phosphorylated SFRS13A (By similarity). Interacts with SAFB/SAFB1 (By similarity). Interacts with ILDR1 (via C-terminus) and ILDR2 (By similarity).</text>
</comment>
<comment type="subcellular location">
    <subcellularLocation>
        <location evidence="2">Nucleus</location>
    </subcellularLocation>
</comment>
<comment type="PTM">
    <text evidence="1">Phosphorylated in the RS domains.</text>
</comment>
<comment type="similarity">
    <text evidence="6">Belongs to the splicing factor SR family.</text>
</comment>
<dbReference type="EMBL" id="BC103113">
    <property type="protein sequence ID" value="AAI03114.1"/>
    <property type="molecule type" value="mRNA"/>
</dbReference>
<dbReference type="RefSeq" id="NP_001029948.1">
    <property type="nucleotide sequence ID" value="NM_001034776.2"/>
</dbReference>
<dbReference type="BMRB" id="Q3ZBT6"/>
<dbReference type="SMR" id="Q3ZBT6"/>
<dbReference type="FunCoup" id="Q3ZBT6">
    <property type="interactions" value="4401"/>
</dbReference>
<dbReference type="STRING" id="9913.ENSBTAP00000002225"/>
<dbReference type="PaxDb" id="9913-ENSBTAP00000002225"/>
<dbReference type="Ensembl" id="ENSBTAT00000002225.7">
    <property type="protein sequence ID" value="ENSBTAP00000002225.5"/>
    <property type="gene ID" value="ENSBTAG00000001697.7"/>
</dbReference>
<dbReference type="GeneID" id="615156"/>
<dbReference type="KEGG" id="bta:615156"/>
<dbReference type="CTD" id="6434"/>
<dbReference type="VEuPathDB" id="HostDB:ENSBTAG00000001697"/>
<dbReference type="VGNC" id="VGNC:36268">
    <property type="gene designation" value="TRA2B"/>
</dbReference>
<dbReference type="eggNOG" id="KOG0118">
    <property type="taxonomic scope" value="Eukaryota"/>
</dbReference>
<dbReference type="GeneTree" id="ENSGT00950000183009"/>
<dbReference type="HOGENOM" id="CLU_050438_3_0_1"/>
<dbReference type="InParanoid" id="Q3ZBT6"/>
<dbReference type="OMA" id="RAKEECQ"/>
<dbReference type="OrthoDB" id="439808at2759"/>
<dbReference type="TreeFam" id="TF106265"/>
<dbReference type="Reactome" id="R-BTA-72163">
    <property type="pathway name" value="mRNA Splicing - Major Pathway"/>
</dbReference>
<dbReference type="Reactome" id="R-BTA-72203">
    <property type="pathway name" value="Processing of Capped Intron-Containing Pre-mRNA"/>
</dbReference>
<dbReference type="Reactome" id="R-BTA-9013418">
    <property type="pathway name" value="RHOBTB2 GTPase cycle"/>
</dbReference>
<dbReference type="Reactome" id="R-BTA-9013422">
    <property type="pathway name" value="RHOBTB1 GTPase cycle"/>
</dbReference>
<dbReference type="Proteomes" id="UP000009136">
    <property type="component" value="Chromosome 1"/>
</dbReference>
<dbReference type="Bgee" id="ENSBTAG00000001697">
    <property type="expression patterns" value="Expressed in thymus and 105 other cell types or tissues"/>
</dbReference>
<dbReference type="GO" id="GO:0005634">
    <property type="term" value="C:nucleus"/>
    <property type="evidence" value="ECO:0000250"/>
    <property type="project" value="UniProtKB"/>
</dbReference>
<dbReference type="GO" id="GO:0005681">
    <property type="term" value="C:spliceosomal complex"/>
    <property type="evidence" value="ECO:0000318"/>
    <property type="project" value="GO_Central"/>
</dbReference>
<dbReference type="GO" id="GO:0003729">
    <property type="term" value="F:mRNA binding"/>
    <property type="evidence" value="ECO:0000250"/>
    <property type="project" value="UniProtKB"/>
</dbReference>
<dbReference type="GO" id="GO:0003723">
    <property type="term" value="F:RNA binding"/>
    <property type="evidence" value="ECO:0000318"/>
    <property type="project" value="GO_Central"/>
</dbReference>
<dbReference type="GO" id="GO:0006397">
    <property type="term" value="P:mRNA processing"/>
    <property type="evidence" value="ECO:0007669"/>
    <property type="project" value="UniProtKB-KW"/>
</dbReference>
<dbReference type="GO" id="GO:0048026">
    <property type="term" value="P:positive regulation of mRNA splicing, via spliceosome"/>
    <property type="evidence" value="ECO:0000250"/>
    <property type="project" value="UniProtKB"/>
</dbReference>
<dbReference type="GO" id="GO:0000381">
    <property type="term" value="P:regulation of alternative mRNA splicing, via spliceosome"/>
    <property type="evidence" value="ECO:0000250"/>
    <property type="project" value="UniProtKB"/>
</dbReference>
<dbReference type="GO" id="GO:0043484">
    <property type="term" value="P:regulation of RNA splicing"/>
    <property type="evidence" value="ECO:0000250"/>
    <property type="project" value="UniProtKB"/>
</dbReference>
<dbReference type="GO" id="GO:0008380">
    <property type="term" value="P:RNA splicing"/>
    <property type="evidence" value="ECO:0007669"/>
    <property type="project" value="UniProtKB-KW"/>
</dbReference>
<dbReference type="CDD" id="cd12363">
    <property type="entry name" value="RRM_TRA2"/>
    <property type="match status" value="1"/>
</dbReference>
<dbReference type="FunFam" id="3.30.70.330:FF:000160">
    <property type="entry name" value="Transformer-2 protein homolog beta"/>
    <property type="match status" value="1"/>
</dbReference>
<dbReference type="Gene3D" id="3.30.70.330">
    <property type="match status" value="1"/>
</dbReference>
<dbReference type="InterPro" id="IPR012677">
    <property type="entry name" value="Nucleotide-bd_a/b_plait_sf"/>
</dbReference>
<dbReference type="InterPro" id="IPR035979">
    <property type="entry name" value="RBD_domain_sf"/>
</dbReference>
<dbReference type="InterPro" id="IPR050441">
    <property type="entry name" value="RBM"/>
</dbReference>
<dbReference type="InterPro" id="IPR000504">
    <property type="entry name" value="RRM_dom"/>
</dbReference>
<dbReference type="PANTHER" id="PTHR48034">
    <property type="entry name" value="TRANSFORMER-2 SEX-DETERMINING PROTEIN-RELATED"/>
    <property type="match status" value="1"/>
</dbReference>
<dbReference type="Pfam" id="PF00076">
    <property type="entry name" value="RRM_1"/>
    <property type="match status" value="1"/>
</dbReference>
<dbReference type="SMART" id="SM00360">
    <property type="entry name" value="RRM"/>
    <property type="match status" value="1"/>
</dbReference>
<dbReference type="SUPFAM" id="SSF54928">
    <property type="entry name" value="RNA-binding domain, RBD"/>
    <property type="match status" value="1"/>
</dbReference>
<dbReference type="PROSITE" id="PS50102">
    <property type="entry name" value="RRM"/>
    <property type="match status" value="1"/>
</dbReference>
<accession>Q3ZBT6</accession>
<gene>
    <name type="primary">TRA2B</name>
    <name type="synonym">SFRS10</name>
</gene>
<evidence type="ECO:0000250" key="1">
    <source>
        <dbReference type="UniProtKB" id="P62995"/>
    </source>
</evidence>
<evidence type="ECO:0000250" key="2">
    <source>
        <dbReference type="UniProtKB" id="P62996"/>
    </source>
</evidence>
<evidence type="ECO:0000250" key="3">
    <source>
        <dbReference type="UniProtKB" id="P62997"/>
    </source>
</evidence>
<evidence type="ECO:0000255" key="4">
    <source>
        <dbReference type="PROSITE-ProRule" id="PRU00176"/>
    </source>
</evidence>
<evidence type="ECO:0000256" key="5">
    <source>
        <dbReference type="SAM" id="MobiDB-lite"/>
    </source>
</evidence>
<evidence type="ECO:0000305" key="6"/>
<sequence length="288" mass="33666">MSDSGEQNYGERESRSASRSGSAHGSGKSARHTPARSRSKEDSRRSRSKSRSRSESRSRSRRSSRRHYTRSRSRSRSHRRSRSRSYSRDYRRRHSHSHSPMSTRRRHVGNRANPDPNCCLGVFGLSLYTTERDLREVFSKYGPIADVSIVYDQQSRRSRGFAFVYFENVDDAKEAKERANGMELDGRRIRVDFSITKRPHTPTPGIYMGRPTYGSSRRRDYYDRGYDRGYDDRDYYSRSYRGGGGGGGGWRAAQDRDQIYRRRSPSPYYSRGGYRSRSRSRSYSPRRY</sequence>
<proteinExistence type="evidence at transcript level"/>
<protein>
    <recommendedName>
        <fullName>Transformer-2 protein homolog beta</fullName>
        <shortName>TRA-2 beta</shortName>
        <shortName>TRA2-beta</shortName>
    </recommendedName>
    <alternativeName>
        <fullName>Splicing factor, arginine/serine-rich 10</fullName>
    </alternativeName>
    <alternativeName>
        <fullName>Transformer-2 protein homolog B</fullName>
    </alternativeName>
</protein>
<name>TRA2B_BOVIN</name>
<feature type="initiator methionine" description="Removed" evidence="1">
    <location>
        <position position="1"/>
    </location>
</feature>
<feature type="chain" id="PRO_0000287722" description="Transformer-2 protein homolog beta">
    <location>
        <begin position="2"/>
        <end position="288"/>
    </location>
</feature>
<feature type="domain" description="RRM" evidence="4">
    <location>
        <begin position="118"/>
        <end position="196"/>
    </location>
</feature>
<feature type="region of interest" description="Disordered" evidence="5">
    <location>
        <begin position="1"/>
        <end position="114"/>
    </location>
</feature>
<feature type="region of interest" description="Linker">
    <location>
        <begin position="193"/>
        <end position="230"/>
    </location>
</feature>
<feature type="region of interest" description="Disordered" evidence="5">
    <location>
        <begin position="196"/>
        <end position="225"/>
    </location>
</feature>
<feature type="region of interest" description="Disordered" evidence="5">
    <location>
        <begin position="242"/>
        <end position="288"/>
    </location>
</feature>
<feature type="compositionally biased region" description="Low complexity" evidence="5">
    <location>
        <begin position="17"/>
        <end position="28"/>
    </location>
</feature>
<feature type="compositionally biased region" description="Basic residues" evidence="5">
    <location>
        <begin position="59"/>
        <end position="109"/>
    </location>
</feature>
<feature type="compositionally biased region" description="Basic residues" evidence="5">
    <location>
        <begin position="274"/>
        <end position="288"/>
    </location>
</feature>
<feature type="modified residue" description="N-acetylserine" evidence="1">
    <location>
        <position position="2"/>
    </location>
</feature>
<feature type="modified residue" description="Phosphoserine" evidence="1">
    <location>
        <position position="2"/>
    </location>
</feature>
<feature type="modified residue" description="Phosphoserine" evidence="1">
    <location>
        <position position="4"/>
    </location>
</feature>
<feature type="modified residue" description="Phosphoserine" evidence="1">
    <location>
        <position position="14"/>
    </location>
</feature>
<feature type="modified residue" description="Phosphoserine" evidence="3">
    <location>
        <position position="29"/>
    </location>
</feature>
<feature type="modified residue" description="Phosphothreonine" evidence="3">
    <location>
        <position position="33"/>
    </location>
</feature>
<feature type="modified residue" description="Phosphoserine" evidence="1">
    <location>
        <position position="83"/>
    </location>
</feature>
<feature type="modified residue" description="Phosphoserine" evidence="1">
    <location>
        <position position="85"/>
    </location>
</feature>
<feature type="modified residue" description="Phosphoserine" evidence="1">
    <location>
        <position position="87"/>
    </location>
</feature>
<feature type="modified residue" description="Phosphoserine" evidence="1">
    <location>
        <position position="95"/>
    </location>
</feature>
<feature type="modified residue" description="Phosphoserine" evidence="1">
    <location>
        <position position="97"/>
    </location>
</feature>
<feature type="modified residue" description="Phosphoserine" evidence="1">
    <location>
        <position position="99"/>
    </location>
</feature>
<feature type="modified residue" description="Phosphothreonine" evidence="1">
    <location>
        <position position="103"/>
    </location>
</feature>
<feature type="modified residue" description="Phosphothreonine" evidence="1">
    <location>
        <position position="201"/>
    </location>
</feature>
<feature type="modified residue" description="Phosphothreonine" evidence="1">
    <location>
        <position position="203"/>
    </location>
</feature>
<feature type="modified residue" description="Phosphoserine" evidence="1">
    <location>
        <position position="215"/>
    </location>
</feature>
<feature type="modified residue" description="Phosphoserine" evidence="1">
    <location>
        <position position="237"/>
    </location>
</feature>
<feature type="modified residue" description="Asymmetric dimethylarginine; alternate" evidence="1">
    <location>
        <position position="241"/>
    </location>
</feature>
<feature type="modified residue" description="Dimethylated arginine; alternate" evidence="1">
    <location>
        <position position="241"/>
    </location>
</feature>
<feature type="modified residue" description="Omega-N-methylarginine; alternate" evidence="1">
    <location>
        <position position="241"/>
    </location>
</feature>
<feature type="cross-link" description="Glycyl lysine isopeptide (Lys-Gly) (interchain with G-Cter in SUMO2)" evidence="1">
    <location>
        <position position="197"/>
    </location>
</feature>
<keyword id="KW-0007">Acetylation</keyword>
<keyword id="KW-0010">Activator</keyword>
<keyword id="KW-1017">Isopeptide bond</keyword>
<keyword id="KW-0488">Methylation</keyword>
<keyword id="KW-0507">mRNA processing</keyword>
<keyword id="KW-0508">mRNA splicing</keyword>
<keyword id="KW-0539">Nucleus</keyword>
<keyword id="KW-0597">Phosphoprotein</keyword>
<keyword id="KW-1185">Reference proteome</keyword>
<keyword id="KW-0678">Repressor</keyword>
<keyword id="KW-0694">RNA-binding</keyword>
<keyword id="KW-0832">Ubl conjugation</keyword>